<sequence>MSDADPSLQRIISVELDEGSIVWRNPDVEQERRVAIFDLIEENRFVPQRGHPDGYAGPYRLKLRVEDGRLIFEIAREDGSPLEAVILGLGRFRRPIRDYFAICDSYYQAIKTSTAQQIETVDMARRALHNEAAEMLMDRLDGKIAVDFDTARRLFTLICVLHIKG</sequence>
<comment type="similarity">
    <text evidence="1">Belongs to the UPF0262 family.</text>
</comment>
<reference key="1">
    <citation type="journal article" date="2009" name="Proc. Natl. Acad. Sci. U.S.A.">
        <title>The genomic basis of trophic strategy in marine bacteria.</title>
        <authorList>
            <person name="Lauro F.M."/>
            <person name="McDougald D."/>
            <person name="Thomas T."/>
            <person name="Williams T.J."/>
            <person name="Egan S."/>
            <person name="Rice S."/>
            <person name="DeMaere M.Z."/>
            <person name="Ting L."/>
            <person name="Ertan H."/>
            <person name="Johnson J."/>
            <person name="Ferriera S."/>
            <person name="Lapidus A."/>
            <person name="Anderson I."/>
            <person name="Kyrpides N."/>
            <person name="Munk A.C."/>
            <person name="Detter C."/>
            <person name="Han C.S."/>
            <person name="Brown M.V."/>
            <person name="Robb F.T."/>
            <person name="Kjelleberg S."/>
            <person name="Cavicchioli R."/>
        </authorList>
    </citation>
    <scope>NUCLEOTIDE SEQUENCE [LARGE SCALE GENOMIC DNA]</scope>
    <source>
        <strain>DSM 13593 / LMG 18877 / RB2256</strain>
    </source>
</reference>
<feature type="chain" id="PRO_0000314219" description="UPF0262 protein Sala_0765">
    <location>
        <begin position="1"/>
        <end position="165"/>
    </location>
</feature>
<dbReference type="EMBL" id="CP000356">
    <property type="protein sequence ID" value="ABF52485.1"/>
    <property type="molecule type" value="Genomic_DNA"/>
</dbReference>
<dbReference type="RefSeq" id="WP_011541075.1">
    <property type="nucleotide sequence ID" value="NC_008048.1"/>
</dbReference>
<dbReference type="STRING" id="317655.Sala_0765"/>
<dbReference type="KEGG" id="sal:Sala_0765"/>
<dbReference type="eggNOG" id="COG5328">
    <property type="taxonomic scope" value="Bacteria"/>
</dbReference>
<dbReference type="HOGENOM" id="CLU_112904_0_0_5"/>
<dbReference type="OrthoDB" id="9798434at2"/>
<dbReference type="Proteomes" id="UP000006578">
    <property type="component" value="Chromosome"/>
</dbReference>
<dbReference type="HAMAP" id="MF_00678">
    <property type="entry name" value="UPF0262"/>
    <property type="match status" value="1"/>
</dbReference>
<dbReference type="InterPro" id="IPR008321">
    <property type="entry name" value="UCP032146"/>
</dbReference>
<dbReference type="NCBIfam" id="NF002769">
    <property type="entry name" value="PRK02853.1"/>
    <property type="match status" value="1"/>
</dbReference>
<dbReference type="Pfam" id="PF06793">
    <property type="entry name" value="UPF0262"/>
    <property type="match status" value="1"/>
</dbReference>
<dbReference type="PIRSF" id="PIRSF032146">
    <property type="entry name" value="UCP032146"/>
    <property type="match status" value="1"/>
</dbReference>
<evidence type="ECO:0000255" key="1">
    <source>
        <dbReference type="HAMAP-Rule" id="MF_00678"/>
    </source>
</evidence>
<organism>
    <name type="scientific">Sphingopyxis alaskensis (strain DSM 13593 / LMG 18877 / RB2256)</name>
    <name type="common">Sphingomonas alaskensis</name>
    <dbReference type="NCBI Taxonomy" id="317655"/>
    <lineage>
        <taxon>Bacteria</taxon>
        <taxon>Pseudomonadati</taxon>
        <taxon>Pseudomonadota</taxon>
        <taxon>Alphaproteobacteria</taxon>
        <taxon>Sphingomonadales</taxon>
        <taxon>Sphingomonadaceae</taxon>
        <taxon>Sphingopyxis</taxon>
    </lineage>
</organism>
<protein>
    <recommendedName>
        <fullName evidence="1">UPF0262 protein Sala_0765</fullName>
    </recommendedName>
</protein>
<name>Y765_SPHAL</name>
<gene>
    <name type="ordered locus">Sala_0765</name>
</gene>
<accession>Q1GV37</accession>
<keyword id="KW-1185">Reference proteome</keyword>
<proteinExistence type="inferred from homology"/>